<reference key="1">
    <citation type="journal article" date="1986" name="J. Biochem.">
        <title>Dog and rat pancreatic phospholipases A2: complete amino acid sequences deduced from complementary DNAs.</title>
        <authorList>
            <person name="Ohara O."/>
            <person name="Tamaki M."/>
            <person name="Nakamura E."/>
            <person name="Tsuruta Y."/>
            <person name="Fujii Y."/>
            <person name="Shin M."/>
            <person name="Teraoka H."/>
            <person name="Okamoto M."/>
        </authorList>
    </citation>
    <scope>NUCLEOTIDE SEQUENCE [MRNA]</scope>
</reference>
<reference key="2">
    <citation type="journal article" date="1989" name="Biochim. Biophys. Acta">
        <title>Presence of pancreatic-type phospholipase A2 mRNA in rat gastric mucosa and lung.</title>
        <authorList>
            <person name="Sakata T."/>
            <person name="Nakamura E."/>
            <person name="Tsuruta Y."/>
            <person name="Tamaki M."/>
            <person name="Teraoka H."/>
            <person name="Tojo H."/>
            <person name="Ono T."/>
            <person name="Okamoto M."/>
        </authorList>
    </citation>
    <scope>NUCLEOTIDE SEQUENCE [MRNA]</scope>
</reference>
<reference key="3">
    <citation type="journal article" date="1984" name="J. Biochem.">
        <title>Rat pancreatic phospholipase A2: purification, characterization, and N-terminal amino acid sequence.</title>
        <authorList>
            <person name="Ono T."/>
            <person name="Tojo H."/>
            <person name="Inoue K."/>
            <person name="Kagamiyama H."/>
            <person name="Yamano T."/>
            <person name="Okamoto M."/>
        </authorList>
    </citation>
    <scope>PROTEIN SEQUENCE OF 23-54</scope>
</reference>
<reference key="4">
    <citation type="journal article" date="1992" name="Biochim. Biophys. Acta">
        <title>Characterization of recombinant human and rat pancreatic phospholipases A2 secreted from Saccharomyces cerevisiae: difference in proteolytic processing.</title>
        <authorList>
            <person name="Kanda A."/>
            <person name="Tamaki M."/>
            <person name="Nakamura E."/>
            <person name="Teraoka H."/>
            <person name="Yoshida N."/>
        </authorList>
    </citation>
    <scope>FUNCTION</scope>
    <scope>CATALYTIC ACTIVITY</scope>
</reference>
<reference key="5">
    <citation type="journal article" date="2004" name="Biochem. J.">
        <title>Biosynthesis of anandamide and N-palmitoylethanolamine by sequential actions of phospholipase A2 and lysophospholipase D.</title>
        <authorList>
            <person name="Sun Y.X."/>
            <person name="Tsuboi K."/>
            <person name="Okamoto Y."/>
            <person name="Tonai T."/>
            <person name="Murakami M."/>
            <person name="Kudo I."/>
            <person name="Ueda N."/>
        </authorList>
    </citation>
    <scope>FUNCTION</scope>
    <scope>CATALYTIC ACTIVITY</scope>
</reference>
<reference key="6">
    <citation type="journal article" date="2007" name="J. Biol. Chem.">
        <title>Discovery and characterization of a Ca2+-independent phosphatidylethanolamine N-acyltransferase generating the anandamide precursor and its congeners.</title>
        <authorList>
            <person name="Jin X.H."/>
            <person name="Okamoto Y."/>
            <person name="Morishita J."/>
            <person name="Tsuboi K."/>
            <person name="Tonai T."/>
            <person name="Ueda N."/>
        </authorList>
    </citation>
    <scope>FUNCTION</scope>
    <scope>CATALYTIC ACTIVITY</scope>
</reference>
<organism>
    <name type="scientific">Rattus norvegicus</name>
    <name type="common">Rat</name>
    <dbReference type="NCBI Taxonomy" id="10116"/>
    <lineage>
        <taxon>Eukaryota</taxon>
        <taxon>Metazoa</taxon>
        <taxon>Chordata</taxon>
        <taxon>Craniata</taxon>
        <taxon>Vertebrata</taxon>
        <taxon>Euteleostomi</taxon>
        <taxon>Mammalia</taxon>
        <taxon>Eutheria</taxon>
        <taxon>Euarchontoglires</taxon>
        <taxon>Glires</taxon>
        <taxon>Rodentia</taxon>
        <taxon>Myomorpha</taxon>
        <taxon>Muroidea</taxon>
        <taxon>Muridae</taxon>
        <taxon>Murinae</taxon>
        <taxon>Rattus</taxon>
    </lineage>
</organism>
<accession>P04055</accession>
<evidence type="ECO:0000250" key="1">
    <source>
        <dbReference type="UniProtKB" id="P00592"/>
    </source>
</evidence>
<evidence type="ECO:0000250" key="2">
    <source>
        <dbReference type="UniProtKB" id="P00593"/>
    </source>
</evidence>
<evidence type="ECO:0000250" key="3">
    <source>
        <dbReference type="UniProtKB" id="P04054"/>
    </source>
</evidence>
<evidence type="ECO:0000250" key="4">
    <source>
        <dbReference type="UniProtKB" id="Q9Z0Y2"/>
    </source>
</evidence>
<evidence type="ECO:0000255" key="5">
    <source>
        <dbReference type="PROSITE-ProRule" id="PRU10035"/>
    </source>
</evidence>
<evidence type="ECO:0000255" key="6">
    <source>
        <dbReference type="PROSITE-ProRule" id="PRU10036"/>
    </source>
</evidence>
<evidence type="ECO:0000269" key="7">
    <source>
    </source>
</evidence>
<evidence type="ECO:0000269" key="8">
    <source>
    </source>
</evidence>
<evidence type="ECO:0000269" key="9">
    <source>
    </source>
</evidence>
<evidence type="ECO:0000269" key="10">
    <source>
    </source>
</evidence>
<evidence type="ECO:0000305" key="11"/>
<evidence type="ECO:0000305" key="12">
    <source>
    </source>
</evidence>
<evidence type="ECO:0000305" key="13">
    <source>
    </source>
</evidence>
<evidence type="ECO:0000305" key="14">
    <source>
    </source>
</evidence>
<proteinExistence type="evidence at protein level"/>
<dbReference type="EC" id="3.1.1.4" evidence="9"/>
<dbReference type="EMBL" id="D00036">
    <property type="protein sequence ID" value="BAA00024.1"/>
    <property type="molecule type" value="mRNA"/>
</dbReference>
<dbReference type="PIR" id="A92008">
    <property type="entry name" value="PSRT"/>
</dbReference>
<dbReference type="RefSeq" id="NP_113773.1">
    <property type="nucleotide sequence ID" value="NM_031585.2"/>
</dbReference>
<dbReference type="RefSeq" id="XP_017453797.1">
    <property type="nucleotide sequence ID" value="XM_017598308.1"/>
</dbReference>
<dbReference type="RefSeq" id="XP_063127301.1">
    <property type="nucleotide sequence ID" value="XM_063271231.1"/>
</dbReference>
<dbReference type="SMR" id="P04055"/>
<dbReference type="FunCoup" id="P04055">
    <property type="interactions" value="232"/>
</dbReference>
<dbReference type="STRING" id="10116.ENSRNOP00000001525"/>
<dbReference type="BindingDB" id="P04055"/>
<dbReference type="ChEMBL" id="CHEMBL5016"/>
<dbReference type="DrugCentral" id="P04055"/>
<dbReference type="SwissLipids" id="SLP:000001183"/>
<dbReference type="PaxDb" id="10116-ENSRNOP00000001525"/>
<dbReference type="GeneID" id="29526"/>
<dbReference type="KEGG" id="rno:29526"/>
<dbReference type="UCSC" id="RGD:61949">
    <property type="organism name" value="rat"/>
</dbReference>
<dbReference type="AGR" id="RGD:61949"/>
<dbReference type="CTD" id="5319"/>
<dbReference type="RGD" id="61949">
    <property type="gene designation" value="Pla2g1b"/>
</dbReference>
<dbReference type="VEuPathDB" id="HostDB:ENSRNOG00000001153"/>
<dbReference type="eggNOG" id="KOG4087">
    <property type="taxonomic scope" value="Eukaryota"/>
</dbReference>
<dbReference type="HOGENOM" id="CLU_090683_1_1_1"/>
<dbReference type="InParanoid" id="P04055"/>
<dbReference type="OrthoDB" id="75428at9989"/>
<dbReference type="PhylomeDB" id="P04055"/>
<dbReference type="TreeFam" id="TF319283"/>
<dbReference type="Reactome" id="R-RNO-1482788">
    <property type="pathway name" value="Acyl chain remodelling of PC"/>
</dbReference>
<dbReference type="Reactome" id="R-RNO-1482801">
    <property type="pathway name" value="Acyl chain remodelling of PS"/>
</dbReference>
<dbReference type="Reactome" id="R-RNO-1482839">
    <property type="pathway name" value="Acyl chain remodelling of PE"/>
</dbReference>
<dbReference type="Reactome" id="R-RNO-1482922">
    <property type="pathway name" value="Acyl chain remodelling of PI"/>
</dbReference>
<dbReference type="Reactome" id="R-RNO-1482925">
    <property type="pathway name" value="Acyl chain remodelling of PG"/>
</dbReference>
<dbReference type="Reactome" id="R-RNO-1483166">
    <property type="pathway name" value="Synthesis of PA"/>
</dbReference>
<dbReference type="PRO" id="PR:P04055"/>
<dbReference type="Proteomes" id="UP000002494">
    <property type="component" value="Chromosome 12"/>
</dbReference>
<dbReference type="Bgee" id="ENSRNOG00000001153">
    <property type="expression patterns" value="Expressed in stomach and 18 other cell types or tissues"/>
</dbReference>
<dbReference type="GO" id="GO:0009986">
    <property type="term" value="C:cell surface"/>
    <property type="evidence" value="ECO:0000314"/>
    <property type="project" value="BHF-UCL"/>
</dbReference>
<dbReference type="GO" id="GO:0005576">
    <property type="term" value="C:extracellular region"/>
    <property type="evidence" value="ECO:0000266"/>
    <property type="project" value="RGD"/>
</dbReference>
<dbReference type="GO" id="GO:0005615">
    <property type="term" value="C:extracellular space"/>
    <property type="evidence" value="ECO:0000266"/>
    <property type="project" value="RGD"/>
</dbReference>
<dbReference type="GO" id="GO:0030141">
    <property type="term" value="C:secretory granule"/>
    <property type="evidence" value="ECO:0000314"/>
    <property type="project" value="RGD"/>
</dbReference>
<dbReference type="GO" id="GO:0032052">
    <property type="term" value="F:bile acid binding"/>
    <property type="evidence" value="ECO:0000250"/>
    <property type="project" value="UniProtKB"/>
</dbReference>
<dbReference type="GO" id="GO:0005509">
    <property type="term" value="F:calcium ion binding"/>
    <property type="evidence" value="ECO:0000266"/>
    <property type="project" value="RGD"/>
</dbReference>
<dbReference type="GO" id="GO:0047498">
    <property type="term" value="F:calcium-dependent phospholipase A2 activity"/>
    <property type="evidence" value="ECO:0000314"/>
    <property type="project" value="RGD"/>
</dbReference>
<dbReference type="GO" id="GO:0004623">
    <property type="term" value="F:phospholipase A2 activity"/>
    <property type="evidence" value="ECO:0000314"/>
    <property type="project" value="BHF-UCL"/>
</dbReference>
<dbReference type="GO" id="GO:0005543">
    <property type="term" value="F:phospholipid binding"/>
    <property type="evidence" value="ECO:0000318"/>
    <property type="project" value="GO_Central"/>
</dbReference>
<dbReference type="GO" id="GO:0005102">
    <property type="term" value="F:signaling receptor binding"/>
    <property type="evidence" value="ECO:0000314"/>
    <property type="project" value="BHF-UCL"/>
</dbReference>
<dbReference type="GO" id="GO:0061844">
    <property type="term" value="P:antimicrobial humoral immune response mediated by antimicrobial peptide"/>
    <property type="evidence" value="ECO:0000266"/>
    <property type="project" value="RGD"/>
</dbReference>
<dbReference type="GO" id="GO:0032869">
    <property type="term" value="P:cellular response to insulin stimulus"/>
    <property type="evidence" value="ECO:0000250"/>
    <property type="project" value="BHF-UCL"/>
</dbReference>
<dbReference type="GO" id="GO:0006633">
    <property type="term" value="P:fatty acid biosynthetic process"/>
    <property type="evidence" value="ECO:0000314"/>
    <property type="project" value="BHF-UCL"/>
</dbReference>
<dbReference type="GO" id="GO:0002227">
    <property type="term" value="P:innate immune response in mucosa"/>
    <property type="evidence" value="ECO:0000266"/>
    <property type="project" value="RGD"/>
</dbReference>
<dbReference type="GO" id="GO:0035556">
    <property type="term" value="P:intracellular signal transduction"/>
    <property type="evidence" value="ECO:0000266"/>
    <property type="project" value="RGD"/>
</dbReference>
<dbReference type="GO" id="GO:0019370">
    <property type="term" value="P:leukotriene biosynthetic process"/>
    <property type="evidence" value="ECO:0000266"/>
    <property type="project" value="RGD"/>
</dbReference>
<dbReference type="GO" id="GO:0016042">
    <property type="term" value="P:lipid catabolic process"/>
    <property type="evidence" value="ECO:0000266"/>
    <property type="project" value="RGD"/>
</dbReference>
<dbReference type="GO" id="GO:0030593">
    <property type="term" value="P:neutrophil chemotaxis"/>
    <property type="evidence" value="ECO:0000266"/>
    <property type="project" value="RGD"/>
</dbReference>
<dbReference type="GO" id="GO:0002446">
    <property type="term" value="P:neutrophil mediated immunity"/>
    <property type="evidence" value="ECO:0000266"/>
    <property type="project" value="RGD"/>
</dbReference>
<dbReference type="GO" id="GO:0046470">
    <property type="term" value="P:phosphatidylcholine metabolic process"/>
    <property type="evidence" value="ECO:0000266"/>
    <property type="project" value="RGD"/>
</dbReference>
<dbReference type="GO" id="GO:0046471">
    <property type="term" value="P:phosphatidylglycerol metabolic process"/>
    <property type="evidence" value="ECO:0000250"/>
    <property type="project" value="UniProtKB"/>
</dbReference>
<dbReference type="GO" id="GO:0006644">
    <property type="term" value="P:phospholipid metabolic process"/>
    <property type="evidence" value="ECO:0000314"/>
    <property type="project" value="RGD"/>
</dbReference>
<dbReference type="GO" id="GO:0010524">
    <property type="term" value="P:positive regulation of calcium ion transport into cytosol"/>
    <property type="evidence" value="ECO:0000266"/>
    <property type="project" value="RGD"/>
</dbReference>
<dbReference type="GO" id="GO:0008284">
    <property type="term" value="P:positive regulation of cell population proliferation"/>
    <property type="evidence" value="ECO:0000314"/>
    <property type="project" value="BHF-UCL"/>
</dbReference>
<dbReference type="GO" id="GO:0048146">
    <property type="term" value="P:positive regulation of fibroblast proliferation"/>
    <property type="evidence" value="ECO:0000266"/>
    <property type="project" value="RGD"/>
</dbReference>
<dbReference type="GO" id="GO:0050778">
    <property type="term" value="P:positive regulation of immune response"/>
    <property type="evidence" value="ECO:0000266"/>
    <property type="project" value="RGD"/>
</dbReference>
<dbReference type="GO" id="GO:0032757">
    <property type="term" value="P:positive regulation of interleukin-8 production"/>
    <property type="evidence" value="ECO:0000266"/>
    <property type="project" value="RGD"/>
</dbReference>
<dbReference type="GO" id="GO:0043410">
    <property type="term" value="P:positive regulation of MAPK cascade"/>
    <property type="evidence" value="ECO:0000266"/>
    <property type="project" value="RGD"/>
</dbReference>
<dbReference type="GO" id="GO:1904635">
    <property type="term" value="P:positive regulation of podocyte apoptotic process"/>
    <property type="evidence" value="ECO:0000250"/>
    <property type="project" value="UniProtKB"/>
</dbReference>
<dbReference type="GO" id="GO:0045944">
    <property type="term" value="P:positive regulation of transcription by RNA polymerase II"/>
    <property type="evidence" value="ECO:0000266"/>
    <property type="project" value="RGD"/>
</dbReference>
<dbReference type="GO" id="GO:0046324">
    <property type="term" value="P:regulation of D-glucose import"/>
    <property type="evidence" value="ECO:0000250"/>
    <property type="project" value="BHF-UCL"/>
</dbReference>
<dbReference type="CDD" id="cd00125">
    <property type="entry name" value="PLA2c"/>
    <property type="match status" value="1"/>
</dbReference>
<dbReference type="FunFam" id="1.20.90.10:FF:000011">
    <property type="entry name" value="Phospholipase A(2)"/>
    <property type="match status" value="1"/>
</dbReference>
<dbReference type="Gene3D" id="1.20.90.10">
    <property type="entry name" value="Phospholipase A2 domain"/>
    <property type="match status" value="1"/>
</dbReference>
<dbReference type="InterPro" id="IPR001211">
    <property type="entry name" value="PLipase_A2"/>
</dbReference>
<dbReference type="InterPro" id="IPR033112">
    <property type="entry name" value="PLipase_A2_Asp_AS"/>
</dbReference>
<dbReference type="InterPro" id="IPR016090">
    <property type="entry name" value="PLipase_A2_dom"/>
</dbReference>
<dbReference type="InterPro" id="IPR036444">
    <property type="entry name" value="PLipase_A2_dom_sf"/>
</dbReference>
<dbReference type="InterPro" id="IPR033113">
    <property type="entry name" value="PLipase_A2_His_AS"/>
</dbReference>
<dbReference type="PANTHER" id="PTHR11716:SF94">
    <property type="entry name" value="PHOSPHOLIPASE A2"/>
    <property type="match status" value="1"/>
</dbReference>
<dbReference type="PANTHER" id="PTHR11716">
    <property type="entry name" value="PHOSPHOLIPASE A2 FAMILY MEMBER"/>
    <property type="match status" value="1"/>
</dbReference>
<dbReference type="Pfam" id="PF00068">
    <property type="entry name" value="Phospholip_A2_1"/>
    <property type="match status" value="1"/>
</dbReference>
<dbReference type="PRINTS" id="PR00389">
    <property type="entry name" value="PHPHLIPASEA2"/>
</dbReference>
<dbReference type="SMART" id="SM00085">
    <property type="entry name" value="PA2c"/>
    <property type="match status" value="1"/>
</dbReference>
<dbReference type="SUPFAM" id="SSF48619">
    <property type="entry name" value="Phospholipase A2, PLA2"/>
    <property type="match status" value="1"/>
</dbReference>
<dbReference type="PROSITE" id="PS00119">
    <property type="entry name" value="PA2_ASP"/>
    <property type="match status" value="1"/>
</dbReference>
<dbReference type="PROSITE" id="PS00118">
    <property type="entry name" value="PA2_HIS"/>
    <property type="match status" value="1"/>
</dbReference>
<comment type="function">
    <text evidence="3 4 7 8 9">Secretory calcium-dependent phospholipase A2 that primarily targets dietary phospholipids in the intestinal tract (PubMed:1420353, PubMed:17158102). Hydrolyzes the ester bond of the fatty acyl group attached at sn-2 position of phospholipids (phospholipase A2 activity) with preference for phosphatidylethanolamines and phosphatidylglycerols over phosphatidylcholines (PubMed:1420353, PubMed:17158102). May play a role in the biosynthesis of N-acyl ethanolamines that regulate energy metabolism and inflammation in the intestinal tract (PubMed:14998370). Hydrolyzes N-acyl phosphatidylethanolamines to N-acyl lysophosphatidylethanolamines, which are further cleaved by a lysophospholipase D to release N-acyl ethanolamines (PubMed:14998370). May act in an autocrine and paracrine manner (By similarity). Has anti-helminth activity in a process regulated by gut microbiota. Upon helminth infection of intestinal epithelia, directly affects phosphatidylethanolamine contents in the membrane of helminth larvae, likely controlling an array of phospholipid-mediated cellular processes such as membrane fusion and cell division while providing for better immune recognition, ultimately reducing larvae integrity and infectivity (By similarity).</text>
</comment>
<comment type="catalytic activity">
    <reaction evidence="5 6 9">
        <text>a 1,2-diacyl-sn-glycero-3-phosphocholine + H2O = a 1-acyl-sn-glycero-3-phosphocholine + a fatty acid + H(+)</text>
        <dbReference type="Rhea" id="RHEA:15801"/>
        <dbReference type="ChEBI" id="CHEBI:15377"/>
        <dbReference type="ChEBI" id="CHEBI:15378"/>
        <dbReference type="ChEBI" id="CHEBI:28868"/>
        <dbReference type="ChEBI" id="CHEBI:57643"/>
        <dbReference type="ChEBI" id="CHEBI:58168"/>
        <dbReference type="EC" id="3.1.1.4"/>
    </reaction>
</comment>
<comment type="catalytic activity">
    <reaction evidence="3">
        <text>1,2-ditetradecanoyl-sn-glycero-3-phosphocholine + H2O = 1-tetradecanoyl-sn-glycero-3-phosphocholine + tetradecanoate + H(+)</text>
        <dbReference type="Rhea" id="RHEA:54456"/>
        <dbReference type="ChEBI" id="CHEBI:15377"/>
        <dbReference type="ChEBI" id="CHEBI:15378"/>
        <dbReference type="ChEBI" id="CHEBI:30807"/>
        <dbReference type="ChEBI" id="CHEBI:45240"/>
        <dbReference type="ChEBI" id="CHEBI:64489"/>
    </reaction>
</comment>
<comment type="catalytic activity">
    <reaction evidence="9">
        <text>1,2-dihexadecanoyl-sn-glycero-3-phosphocholine + H2O = 1-hexadecanoyl-sn-glycero-3-phosphocholine + hexadecanoate + H(+)</text>
        <dbReference type="Rhea" id="RHEA:41223"/>
        <dbReference type="ChEBI" id="CHEBI:7896"/>
        <dbReference type="ChEBI" id="CHEBI:15377"/>
        <dbReference type="ChEBI" id="CHEBI:15378"/>
        <dbReference type="ChEBI" id="CHEBI:72998"/>
        <dbReference type="ChEBI" id="CHEBI:72999"/>
    </reaction>
    <physiologicalReaction direction="left-to-right" evidence="14">
        <dbReference type="Rhea" id="RHEA:41224"/>
    </physiologicalReaction>
</comment>
<comment type="catalytic activity">
    <reaction evidence="9">
        <text>1-hexadecanoyl-2-(9Z-octadecenoyl)-sn-glycero-3-phosphocholine + H2O = 1-hexadecanoyl-sn-glycero-3-phosphocholine + (9Z)-octadecenoate + H(+)</text>
        <dbReference type="Rhea" id="RHEA:38779"/>
        <dbReference type="ChEBI" id="CHEBI:15377"/>
        <dbReference type="ChEBI" id="CHEBI:15378"/>
        <dbReference type="ChEBI" id="CHEBI:30823"/>
        <dbReference type="ChEBI" id="CHEBI:72998"/>
        <dbReference type="ChEBI" id="CHEBI:73001"/>
    </reaction>
    <physiologicalReaction direction="left-to-right" evidence="14">
        <dbReference type="Rhea" id="RHEA:38780"/>
    </physiologicalReaction>
</comment>
<comment type="catalytic activity">
    <reaction evidence="9">
        <text>1-hexadecanoyl-2-(5Z,8Z,11Z,14Z-eicosatetraenoyl)-sn-glycero-3-phosphocholine + H2O = 1-hexadecanoyl-sn-glycero-3-phosphocholine + (5Z,8Z,11Z,14Z)-eicosatetraenoate + H(+)</text>
        <dbReference type="Rhea" id="RHEA:40427"/>
        <dbReference type="ChEBI" id="CHEBI:15377"/>
        <dbReference type="ChEBI" id="CHEBI:15378"/>
        <dbReference type="ChEBI" id="CHEBI:32395"/>
        <dbReference type="ChEBI" id="CHEBI:72998"/>
        <dbReference type="ChEBI" id="CHEBI:73003"/>
    </reaction>
    <physiologicalReaction direction="left-to-right" evidence="14">
        <dbReference type="Rhea" id="RHEA:40428"/>
    </physiologicalReaction>
</comment>
<comment type="catalytic activity">
    <reaction evidence="7">
        <text>1-hexadecanoyl-2-(9Z-octadecenoyl)-sn-glycero-3-phospho-(1'-sn-glycerol) + H2O = 1-hexadecanoyl-sn-glycero-3-phospho-(1'-sn-glycerol) + (9Z)-octadecenoate + H(+)</text>
        <dbReference type="Rhea" id="RHEA:40919"/>
        <dbReference type="ChEBI" id="CHEBI:15377"/>
        <dbReference type="ChEBI" id="CHEBI:15378"/>
        <dbReference type="ChEBI" id="CHEBI:30823"/>
        <dbReference type="ChEBI" id="CHEBI:72841"/>
        <dbReference type="ChEBI" id="CHEBI:75158"/>
    </reaction>
    <physiologicalReaction direction="left-to-right" evidence="12">
        <dbReference type="Rhea" id="RHEA:40920"/>
    </physiologicalReaction>
</comment>
<comment type="catalytic activity">
    <reaction evidence="8">
        <text>N-hexadecanoyl-1,2-di-(9Z-octadecenoyl)-sn-glycero-3-phosphoethanolamine + H2O = N-hexadecanoyl-1-(9Z-octadecenoyl)-sn-glycero-3-phosphoethanolamine + (9Z)-octadecenoate + H(+)</text>
        <dbReference type="Rhea" id="RHEA:45424"/>
        <dbReference type="ChEBI" id="CHEBI:15377"/>
        <dbReference type="ChEBI" id="CHEBI:15378"/>
        <dbReference type="ChEBI" id="CHEBI:30823"/>
        <dbReference type="ChEBI" id="CHEBI:78097"/>
        <dbReference type="ChEBI" id="CHEBI:85217"/>
    </reaction>
    <physiologicalReaction direction="left-to-right" evidence="13">
        <dbReference type="Rhea" id="RHEA:45425"/>
    </physiologicalReaction>
</comment>
<comment type="catalytic activity">
    <reaction evidence="8">
        <text>1-hexadecanoyl-2-(9Z,12Z-octadecadienoyl)-sn-glycero-3-phosphoethanolamine + H2O = 1-hexadecanoyl-sn-glycero-3-phosphoethanolamine + (9Z,12Z)-octadecadienoate + H(+)</text>
        <dbReference type="Rhea" id="RHEA:40815"/>
        <dbReference type="ChEBI" id="CHEBI:15377"/>
        <dbReference type="ChEBI" id="CHEBI:15378"/>
        <dbReference type="ChEBI" id="CHEBI:30245"/>
        <dbReference type="ChEBI" id="CHEBI:73004"/>
        <dbReference type="ChEBI" id="CHEBI:73008"/>
    </reaction>
    <physiologicalReaction direction="left-to-right" evidence="13">
        <dbReference type="Rhea" id="RHEA:40816"/>
    </physiologicalReaction>
</comment>
<comment type="catalytic activity">
    <reaction evidence="8">
        <text>N,1-dihexadecanoyl-2-(9Z,12Z-octadecadienoyl)-sn-glycero-3-phosphoethanolamine + H2O = N,1-dihexadecanoyl-sn-glycero-3-phosphoethanolamine + (9Z,12Z)-octadecadienoate + H(+)</text>
        <dbReference type="Rhea" id="RHEA:56424"/>
        <dbReference type="ChEBI" id="CHEBI:15377"/>
        <dbReference type="ChEBI" id="CHEBI:15378"/>
        <dbReference type="ChEBI" id="CHEBI:30245"/>
        <dbReference type="ChEBI" id="CHEBI:85334"/>
        <dbReference type="ChEBI" id="CHEBI:85335"/>
    </reaction>
    <physiologicalReaction direction="left-to-right" evidence="13">
        <dbReference type="Rhea" id="RHEA:56425"/>
    </physiologicalReaction>
</comment>
<comment type="cofactor">
    <cofactor evidence="2">
        <name>Ca(2+)</name>
        <dbReference type="ChEBI" id="CHEBI:29108"/>
    </cofactor>
    <text evidence="2">Binds 1 Ca(2+) ion per subunit.</text>
</comment>
<comment type="subunit">
    <text evidence="1">Monomer or homodimer.</text>
</comment>
<comment type="subcellular location">
    <subcellularLocation>
        <location evidence="3">Secreted</location>
    </subcellularLocation>
    <text evidence="3">Secreted from pancreatic acinar cells in its inactive form.</text>
</comment>
<comment type="PTM">
    <text evidence="3">Activated by trypsin cleavage in the duodenum. Can also be activated by thrombin or autocatalytically.</text>
</comment>
<comment type="similarity">
    <text evidence="11">Belongs to the phospholipase A2 family.</text>
</comment>
<feature type="signal peptide">
    <location>
        <begin position="1"/>
        <end position="15"/>
    </location>
</feature>
<feature type="propeptide" id="PRO_0000022747" description="Activation peptide" evidence="10">
    <location>
        <begin position="16"/>
        <end position="22"/>
    </location>
</feature>
<feature type="chain" id="PRO_0000022748" description="Phospholipase A2">
    <location>
        <begin position="23"/>
        <end position="146"/>
    </location>
</feature>
<feature type="active site">
    <location>
        <position position="70"/>
    </location>
</feature>
<feature type="active site">
    <location>
        <position position="121"/>
    </location>
</feature>
<feature type="binding site" evidence="2">
    <location>
        <position position="50"/>
    </location>
    <ligand>
        <name>Ca(2+)</name>
        <dbReference type="ChEBI" id="CHEBI:29108"/>
    </ligand>
</feature>
<feature type="binding site" evidence="2">
    <location>
        <position position="52"/>
    </location>
    <ligand>
        <name>Ca(2+)</name>
        <dbReference type="ChEBI" id="CHEBI:29108"/>
    </ligand>
</feature>
<feature type="binding site" evidence="2">
    <location>
        <position position="54"/>
    </location>
    <ligand>
        <name>Ca(2+)</name>
        <dbReference type="ChEBI" id="CHEBI:29108"/>
    </ligand>
</feature>
<feature type="binding site" evidence="2">
    <location>
        <position position="71"/>
    </location>
    <ligand>
        <name>Ca(2+)</name>
        <dbReference type="ChEBI" id="CHEBI:29108"/>
    </ligand>
</feature>
<feature type="disulfide bond" evidence="2">
    <location>
        <begin position="33"/>
        <end position="99"/>
    </location>
</feature>
<feature type="disulfide bond" evidence="2">
    <location>
        <begin position="49"/>
        <end position="146"/>
    </location>
</feature>
<feature type="disulfide bond" evidence="2">
    <location>
        <begin position="51"/>
        <end position="67"/>
    </location>
</feature>
<feature type="disulfide bond" evidence="2">
    <location>
        <begin position="66"/>
        <end position="127"/>
    </location>
</feature>
<feature type="disulfide bond" evidence="2">
    <location>
        <begin position="73"/>
        <end position="120"/>
    </location>
</feature>
<feature type="disulfide bond" evidence="2">
    <location>
        <begin position="83"/>
        <end position="113"/>
    </location>
</feature>
<feature type="disulfide bond" evidence="2">
    <location>
        <begin position="106"/>
        <end position="118"/>
    </location>
</feature>
<sequence length="146" mass="16424">MKLLLLAALLTAGVTAHSISTRAVWQFRNMIKCTIPGSDPLREYNNYGCYCGLGGSGTPVDDLDRCCQTHDHCYNQAKKLESCKFLIDNPYTNTYSYKCSGNVITCSDKNNDCESFICNCDRQAAICFSKVPYNKEYKDLDTKKHC</sequence>
<protein>
    <recommendedName>
        <fullName>Phospholipase A2</fullName>
        <ecNumber evidence="9">3.1.1.4</ecNumber>
    </recommendedName>
    <alternativeName>
        <fullName>Group IB phospholipase A2</fullName>
    </alternativeName>
    <alternativeName>
        <fullName>Phosphatidylcholine 2-acylhydrolase 1B</fullName>
    </alternativeName>
</protein>
<keyword id="KW-0068">Autocatalytic cleavage</keyword>
<keyword id="KW-0106">Calcium</keyword>
<keyword id="KW-0903">Direct protein sequencing</keyword>
<keyword id="KW-1015">Disulfide bond</keyword>
<keyword id="KW-0378">Hydrolase</keyword>
<keyword id="KW-0443">Lipid metabolism</keyword>
<keyword id="KW-0479">Metal-binding</keyword>
<keyword id="KW-1208">Phospholipid metabolism</keyword>
<keyword id="KW-1185">Reference proteome</keyword>
<keyword id="KW-0964">Secreted</keyword>
<keyword id="KW-0732">Signal</keyword>
<keyword id="KW-0865">Zymogen</keyword>
<gene>
    <name type="primary">Pla2g1b</name>
</gene>
<name>PA21B_RAT</name>